<evidence type="ECO:0000255" key="1">
    <source>
        <dbReference type="HAMAP-Rule" id="MF_00374"/>
    </source>
</evidence>
<evidence type="ECO:0000305" key="2"/>
<dbReference type="EMBL" id="CP001600">
    <property type="protein sequence ID" value="ACR70714.1"/>
    <property type="molecule type" value="Genomic_DNA"/>
</dbReference>
<dbReference type="RefSeq" id="WP_005290385.1">
    <property type="nucleotide sequence ID" value="NZ_CP169062.1"/>
</dbReference>
<dbReference type="SMR" id="C5BGL7"/>
<dbReference type="STRING" id="67780.B6E78_09530"/>
<dbReference type="GeneID" id="93122109"/>
<dbReference type="KEGG" id="eic:NT01EI_3586"/>
<dbReference type="HOGENOM" id="CLU_158491_1_2_6"/>
<dbReference type="OrthoDB" id="9815192at2"/>
<dbReference type="Proteomes" id="UP000001485">
    <property type="component" value="Chromosome"/>
</dbReference>
<dbReference type="GO" id="GO:0022625">
    <property type="term" value="C:cytosolic large ribosomal subunit"/>
    <property type="evidence" value="ECO:0007669"/>
    <property type="project" value="TreeGrafter"/>
</dbReference>
<dbReference type="GO" id="GO:0003735">
    <property type="term" value="F:structural constituent of ribosome"/>
    <property type="evidence" value="ECO:0007669"/>
    <property type="project" value="InterPro"/>
</dbReference>
<dbReference type="GO" id="GO:0006412">
    <property type="term" value="P:translation"/>
    <property type="evidence" value="ECO:0007669"/>
    <property type="project" value="UniProtKB-UniRule"/>
</dbReference>
<dbReference type="CDD" id="cd00427">
    <property type="entry name" value="Ribosomal_L29_HIP"/>
    <property type="match status" value="1"/>
</dbReference>
<dbReference type="FunFam" id="1.10.287.310:FF:000001">
    <property type="entry name" value="50S ribosomal protein L29"/>
    <property type="match status" value="1"/>
</dbReference>
<dbReference type="Gene3D" id="1.10.287.310">
    <property type="match status" value="1"/>
</dbReference>
<dbReference type="HAMAP" id="MF_00374">
    <property type="entry name" value="Ribosomal_uL29"/>
    <property type="match status" value="1"/>
</dbReference>
<dbReference type="InterPro" id="IPR050063">
    <property type="entry name" value="Ribosomal_protein_uL29"/>
</dbReference>
<dbReference type="InterPro" id="IPR001854">
    <property type="entry name" value="Ribosomal_uL29"/>
</dbReference>
<dbReference type="InterPro" id="IPR018254">
    <property type="entry name" value="Ribosomal_uL29_CS"/>
</dbReference>
<dbReference type="InterPro" id="IPR036049">
    <property type="entry name" value="Ribosomal_uL29_sf"/>
</dbReference>
<dbReference type="NCBIfam" id="TIGR00012">
    <property type="entry name" value="L29"/>
    <property type="match status" value="1"/>
</dbReference>
<dbReference type="PANTHER" id="PTHR10916">
    <property type="entry name" value="60S RIBOSOMAL PROTEIN L35/50S RIBOSOMAL PROTEIN L29"/>
    <property type="match status" value="1"/>
</dbReference>
<dbReference type="PANTHER" id="PTHR10916:SF0">
    <property type="entry name" value="LARGE RIBOSOMAL SUBUNIT PROTEIN UL29C"/>
    <property type="match status" value="1"/>
</dbReference>
<dbReference type="Pfam" id="PF00831">
    <property type="entry name" value="Ribosomal_L29"/>
    <property type="match status" value="1"/>
</dbReference>
<dbReference type="SUPFAM" id="SSF46561">
    <property type="entry name" value="Ribosomal protein L29 (L29p)"/>
    <property type="match status" value="1"/>
</dbReference>
<dbReference type="PROSITE" id="PS00579">
    <property type="entry name" value="RIBOSOMAL_L29"/>
    <property type="match status" value="1"/>
</dbReference>
<gene>
    <name evidence="1" type="primary">rpmC</name>
    <name type="ordered locus">NT01EI_3586</name>
</gene>
<reference key="1">
    <citation type="submission" date="2009-03" db="EMBL/GenBank/DDBJ databases">
        <title>Complete genome sequence of Edwardsiella ictaluri 93-146.</title>
        <authorList>
            <person name="Williams M.L."/>
            <person name="Gillaspy A.F."/>
            <person name="Dyer D.W."/>
            <person name="Thune R.L."/>
            <person name="Waldbieser G.C."/>
            <person name="Schuster S.C."/>
            <person name="Gipson J."/>
            <person name="Zaitshik J."/>
            <person name="Landry C."/>
            <person name="Lawrence M.L."/>
        </authorList>
    </citation>
    <scope>NUCLEOTIDE SEQUENCE [LARGE SCALE GENOMIC DNA]</scope>
    <source>
        <strain>93-146</strain>
    </source>
</reference>
<comment type="similarity">
    <text evidence="1">Belongs to the universal ribosomal protein uL29 family.</text>
</comment>
<feature type="chain" id="PRO_1000205623" description="Large ribosomal subunit protein uL29">
    <location>
        <begin position="1"/>
        <end position="63"/>
    </location>
</feature>
<sequence length="63" mass="7243">MKANELREKSVEELNTELLNLLREEFNLRMQAAGGQLQQSHLLKQVRRNIARVKTLLNEKAGA</sequence>
<accession>C5BGL7</accession>
<keyword id="KW-0687">Ribonucleoprotein</keyword>
<keyword id="KW-0689">Ribosomal protein</keyword>
<protein>
    <recommendedName>
        <fullName evidence="1">Large ribosomal subunit protein uL29</fullName>
    </recommendedName>
    <alternativeName>
        <fullName evidence="2">50S ribosomal protein L29</fullName>
    </alternativeName>
</protein>
<organism>
    <name type="scientific">Edwardsiella ictaluri (strain 93-146)</name>
    <dbReference type="NCBI Taxonomy" id="634503"/>
    <lineage>
        <taxon>Bacteria</taxon>
        <taxon>Pseudomonadati</taxon>
        <taxon>Pseudomonadota</taxon>
        <taxon>Gammaproteobacteria</taxon>
        <taxon>Enterobacterales</taxon>
        <taxon>Hafniaceae</taxon>
        <taxon>Edwardsiella</taxon>
    </lineage>
</organism>
<proteinExistence type="inferred from homology"/>
<name>RL29_EDWI9</name>